<dbReference type="EC" id="2.7.7.-" evidence="1"/>
<dbReference type="EC" id="2.7.7.108" evidence="1"/>
<dbReference type="EMBL" id="CU928161">
    <property type="protein sequence ID" value="CAR03066.1"/>
    <property type="molecule type" value="Genomic_DNA"/>
</dbReference>
<dbReference type="RefSeq" id="WP_000175635.1">
    <property type="nucleotide sequence ID" value="NC_011742.1"/>
</dbReference>
<dbReference type="SMR" id="B7MAR7"/>
<dbReference type="KEGG" id="ecz:ECS88_1757"/>
<dbReference type="HOGENOM" id="CLU_010245_4_0_6"/>
<dbReference type="Proteomes" id="UP000000747">
    <property type="component" value="Chromosome"/>
</dbReference>
<dbReference type="GO" id="GO:0070733">
    <property type="term" value="F:AMPylase activity"/>
    <property type="evidence" value="ECO:0007669"/>
    <property type="project" value="RHEA"/>
</dbReference>
<dbReference type="GO" id="GO:0005524">
    <property type="term" value="F:ATP binding"/>
    <property type="evidence" value="ECO:0007669"/>
    <property type="project" value="UniProtKB-UniRule"/>
</dbReference>
<dbReference type="GO" id="GO:0000287">
    <property type="term" value="F:magnesium ion binding"/>
    <property type="evidence" value="ECO:0007669"/>
    <property type="project" value="UniProtKB-UniRule"/>
</dbReference>
<dbReference type="HAMAP" id="MF_00692">
    <property type="entry name" value="YdiU_SelO"/>
    <property type="match status" value="1"/>
</dbReference>
<dbReference type="InterPro" id="IPR054838">
    <property type="entry name" value="adnlytase_SelO"/>
</dbReference>
<dbReference type="InterPro" id="IPR003846">
    <property type="entry name" value="SelO"/>
</dbReference>
<dbReference type="NCBIfam" id="NF040880">
    <property type="entry name" value="adnlytase_SelO"/>
    <property type="match status" value="1"/>
</dbReference>
<dbReference type="NCBIfam" id="NF000658">
    <property type="entry name" value="PRK00029.1"/>
    <property type="match status" value="1"/>
</dbReference>
<dbReference type="PANTHER" id="PTHR32057">
    <property type="entry name" value="PROTEIN ADENYLYLTRANSFERASE SELO, MITOCHONDRIAL"/>
    <property type="match status" value="1"/>
</dbReference>
<dbReference type="PANTHER" id="PTHR32057:SF14">
    <property type="entry name" value="PROTEIN ADENYLYLTRANSFERASE SELO, MITOCHONDRIAL"/>
    <property type="match status" value="1"/>
</dbReference>
<dbReference type="Pfam" id="PF02696">
    <property type="entry name" value="SelO"/>
    <property type="match status" value="1"/>
</dbReference>
<name>SELO_ECO45</name>
<reference key="1">
    <citation type="journal article" date="2009" name="PLoS Genet.">
        <title>Organised genome dynamics in the Escherichia coli species results in highly diverse adaptive paths.</title>
        <authorList>
            <person name="Touchon M."/>
            <person name="Hoede C."/>
            <person name="Tenaillon O."/>
            <person name="Barbe V."/>
            <person name="Baeriswyl S."/>
            <person name="Bidet P."/>
            <person name="Bingen E."/>
            <person name="Bonacorsi S."/>
            <person name="Bouchier C."/>
            <person name="Bouvet O."/>
            <person name="Calteau A."/>
            <person name="Chiapello H."/>
            <person name="Clermont O."/>
            <person name="Cruveiller S."/>
            <person name="Danchin A."/>
            <person name="Diard M."/>
            <person name="Dossat C."/>
            <person name="Karoui M.E."/>
            <person name="Frapy E."/>
            <person name="Garry L."/>
            <person name="Ghigo J.M."/>
            <person name="Gilles A.M."/>
            <person name="Johnson J."/>
            <person name="Le Bouguenec C."/>
            <person name="Lescat M."/>
            <person name="Mangenot S."/>
            <person name="Martinez-Jehanne V."/>
            <person name="Matic I."/>
            <person name="Nassif X."/>
            <person name="Oztas S."/>
            <person name="Petit M.A."/>
            <person name="Pichon C."/>
            <person name="Rouy Z."/>
            <person name="Ruf C.S."/>
            <person name="Schneider D."/>
            <person name="Tourret J."/>
            <person name="Vacherie B."/>
            <person name="Vallenet D."/>
            <person name="Medigue C."/>
            <person name="Rocha E.P.C."/>
            <person name="Denamur E."/>
        </authorList>
    </citation>
    <scope>NUCLEOTIDE SEQUENCE [LARGE SCALE GENOMIC DNA]</scope>
    <source>
        <strain>S88 / ExPEC</strain>
    </source>
</reference>
<organism>
    <name type="scientific">Escherichia coli O45:K1 (strain S88 / ExPEC)</name>
    <dbReference type="NCBI Taxonomy" id="585035"/>
    <lineage>
        <taxon>Bacteria</taxon>
        <taxon>Pseudomonadati</taxon>
        <taxon>Pseudomonadota</taxon>
        <taxon>Gammaproteobacteria</taxon>
        <taxon>Enterobacterales</taxon>
        <taxon>Enterobacteriaceae</taxon>
        <taxon>Escherichia</taxon>
    </lineage>
</organism>
<protein>
    <recommendedName>
        <fullName evidence="1">Protein nucleotidyltransferase YdiU</fullName>
        <ecNumber evidence="1">2.7.7.-</ecNumber>
    </recommendedName>
    <alternativeName>
        <fullName evidence="1">Protein adenylyltransferase YdiU</fullName>
        <ecNumber evidence="1">2.7.7.108</ecNumber>
    </alternativeName>
    <alternativeName>
        <fullName evidence="1">Protein uridylyltransferase YdiU</fullName>
        <ecNumber evidence="1">2.7.7.-</ecNumber>
    </alternativeName>
</protein>
<proteinExistence type="inferred from homology"/>
<keyword id="KW-0067">ATP-binding</keyword>
<keyword id="KW-0460">Magnesium</keyword>
<keyword id="KW-0464">Manganese</keyword>
<keyword id="KW-0479">Metal-binding</keyword>
<keyword id="KW-0547">Nucleotide-binding</keyword>
<keyword id="KW-0548">Nucleotidyltransferase</keyword>
<keyword id="KW-1185">Reference proteome</keyword>
<keyword id="KW-0808">Transferase</keyword>
<accession>B7MAR7</accession>
<sequence length="478" mass="54624">MTLSFITRWRDELPETYTALSPTPLNNARLIWHNTELANTLSIPSSLFKNGAGVWGGENLLPGMSPLAQVYSGHQFGVWAGQLGDGRGILLGEQLLADGTTMDWHLKGAGLTPYSRMGDGRAVLRSTIRESLASEAMHYLGIPTTRALSIVTSDSPVYRETVESGAMLMRVAPSHLRFGHFEHFYYRREPEKVRQLADFAIRHYWSHLDDEEDKYRLWFTDVVARTASLIAQWQTVGFAHGVMNTDNMSLLGLTLDYGPFGFLDDYEPGFICNHSDHQGRYSFDNQPAVALWNLQRLAQTLSPFVAVDALNEALDSYQQVLLTHYGQRMRQKLGFMTEQKEDNALLNELFSLMARERSDYTRTFRMLSLTEQHSAASPLRDEFIDRAAFDDWFARYRGRLQQDEITDSERQQLMQSVNPALVLRNWLAQRAIEAAEKDDMTELHRLHEALRNPFSDRDDDYVSRPPDWGKRLEVSCSS</sequence>
<feature type="chain" id="PRO_1000132105" description="Protein nucleotidyltransferase YdiU">
    <location>
        <begin position="1"/>
        <end position="478"/>
    </location>
</feature>
<feature type="active site" description="Proton acceptor" evidence="1">
    <location>
        <position position="246"/>
    </location>
</feature>
<feature type="binding site" evidence="1">
    <location>
        <position position="84"/>
    </location>
    <ligand>
        <name>ATP</name>
        <dbReference type="ChEBI" id="CHEBI:30616"/>
    </ligand>
</feature>
<feature type="binding site" evidence="1">
    <location>
        <position position="86"/>
    </location>
    <ligand>
        <name>ATP</name>
        <dbReference type="ChEBI" id="CHEBI:30616"/>
    </ligand>
</feature>
<feature type="binding site" evidence="1">
    <location>
        <position position="87"/>
    </location>
    <ligand>
        <name>ATP</name>
        <dbReference type="ChEBI" id="CHEBI:30616"/>
    </ligand>
</feature>
<feature type="binding site" evidence="1">
    <location>
        <position position="107"/>
    </location>
    <ligand>
        <name>ATP</name>
        <dbReference type="ChEBI" id="CHEBI:30616"/>
    </ligand>
</feature>
<feature type="binding site" evidence="1">
    <location>
        <position position="119"/>
    </location>
    <ligand>
        <name>ATP</name>
        <dbReference type="ChEBI" id="CHEBI:30616"/>
    </ligand>
</feature>
<feature type="binding site" evidence="1">
    <location>
        <position position="120"/>
    </location>
    <ligand>
        <name>ATP</name>
        <dbReference type="ChEBI" id="CHEBI:30616"/>
    </ligand>
</feature>
<feature type="binding site" evidence="1">
    <location>
        <position position="170"/>
    </location>
    <ligand>
        <name>ATP</name>
        <dbReference type="ChEBI" id="CHEBI:30616"/>
    </ligand>
</feature>
<feature type="binding site" evidence="1">
    <location>
        <position position="177"/>
    </location>
    <ligand>
        <name>ATP</name>
        <dbReference type="ChEBI" id="CHEBI:30616"/>
    </ligand>
</feature>
<feature type="binding site" evidence="1">
    <location>
        <position position="247"/>
    </location>
    <ligand>
        <name>Mg(2+)</name>
        <dbReference type="ChEBI" id="CHEBI:18420"/>
    </ligand>
</feature>
<feature type="binding site" evidence="1">
    <location>
        <position position="256"/>
    </location>
    <ligand>
        <name>ATP</name>
        <dbReference type="ChEBI" id="CHEBI:30616"/>
    </ligand>
</feature>
<feature type="binding site" evidence="1">
    <location>
        <position position="256"/>
    </location>
    <ligand>
        <name>Mg(2+)</name>
        <dbReference type="ChEBI" id="CHEBI:18420"/>
    </ligand>
</feature>
<comment type="function">
    <text evidence="1">Nucleotidyltransferase involved in the post-translational modification of proteins. It can catalyze the addition of adenosine monophosphate (AMP) or uridine monophosphate (UMP) to a protein, resulting in modifications known as AMPylation and UMPylation.</text>
</comment>
<comment type="catalytic activity">
    <reaction evidence="1">
        <text>L-seryl-[protein] + ATP = 3-O-(5'-adenylyl)-L-seryl-[protein] + diphosphate</text>
        <dbReference type="Rhea" id="RHEA:58120"/>
        <dbReference type="Rhea" id="RHEA-COMP:9863"/>
        <dbReference type="Rhea" id="RHEA-COMP:15073"/>
        <dbReference type="ChEBI" id="CHEBI:29999"/>
        <dbReference type="ChEBI" id="CHEBI:30616"/>
        <dbReference type="ChEBI" id="CHEBI:33019"/>
        <dbReference type="ChEBI" id="CHEBI:142516"/>
        <dbReference type="EC" id="2.7.7.108"/>
    </reaction>
</comment>
<comment type="catalytic activity">
    <reaction evidence="1">
        <text>L-threonyl-[protein] + ATP = 3-O-(5'-adenylyl)-L-threonyl-[protein] + diphosphate</text>
        <dbReference type="Rhea" id="RHEA:54292"/>
        <dbReference type="Rhea" id="RHEA-COMP:11060"/>
        <dbReference type="Rhea" id="RHEA-COMP:13847"/>
        <dbReference type="ChEBI" id="CHEBI:30013"/>
        <dbReference type="ChEBI" id="CHEBI:30616"/>
        <dbReference type="ChEBI" id="CHEBI:33019"/>
        <dbReference type="ChEBI" id="CHEBI:138113"/>
        <dbReference type="EC" id="2.7.7.108"/>
    </reaction>
</comment>
<comment type="catalytic activity">
    <reaction evidence="1">
        <text>L-tyrosyl-[protein] + ATP = O-(5'-adenylyl)-L-tyrosyl-[protein] + diphosphate</text>
        <dbReference type="Rhea" id="RHEA:54288"/>
        <dbReference type="Rhea" id="RHEA-COMP:10136"/>
        <dbReference type="Rhea" id="RHEA-COMP:13846"/>
        <dbReference type="ChEBI" id="CHEBI:30616"/>
        <dbReference type="ChEBI" id="CHEBI:33019"/>
        <dbReference type="ChEBI" id="CHEBI:46858"/>
        <dbReference type="ChEBI" id="CHEBI:83624"/>
        <dbReference type="EC" id="2.7.7.108"/>
    </reaction>
</comment>
<comment type="catalytic activity">
    <reaction evidence="1">
        <text>L-histidyl-[protein] + UTP = N(tele)-(5'-uridylyl)-L-histidyl-[protein] + diphosphate</text>
        <dbReference type="Rhea" id="RHEA:83891"/>
        <dbReference type="Rhea" id="RHEA-COMP:9745"/>
        <dbReference type="Rhea" id="RHEA-COMP:20239"/>
        <dbReference type="ChEBI" id="CHEBI:29979"/>
        <dbReference type="ChEBI" id="CHEBI:33019"/>
        <dbReference type="ChEBI" id="CHEBI:46398"/>
        <dbReference type="ChEBI" id="CHEBI:233474"/>
    </reaction>
</comment>
<comment type="catalytic activity">
    <reaction evidence="1">
        <text>L-seryl-[protein] + UTP = O-(5'-uridylyl)-L-seryl-[protein] + diphosphate</text>
        <dbReference type="Rhea" id="RHEA:64604"/>
        <dbReference type="Rhea" id="RHEA-COMP:9863"/>
        <dbReference type="Rhea" id="RHEA-COMP:16635"/>
        <dbReference type="ChEBI" id="CHEBI:29999"/>
        <dbReference type="ChEBI" id="CHEBI:33019"/>
        <dbReference type="ChEBI" id="CHEBI:46398"/>
        <dbReference type="ChEBI" id="CHEBI:156051"/>
    </reaction>
</comment>
<comment type="catalytic activity">
    <reaction evidence="1">
        <text>L-tyrosyl-[protein] + UTP = O-(5'-uridylyl)-L-tyrosyl-[protein] + diphosphate</text>
        <dbReference type="Rhea" id="RHEA:83887"/>
        <dbReference type="Rhea" id="RHEA-COMP:10136"/>
        <dbReference type="Rhea" id="RHEA-COMP:20238"/>
        <dbReference type="ChEBI" id="CHEBI:33019"/>
        <dbReference type="ChEBI" id="CHEBI:46398"/>
        <dbReference type="ChEBI" id="CHEBI:46858"/>
        <dbReference type="ChEBI" id="CHEBI:90602"/>
    </reaction>
</comment>
<comment type="cofactor">
    <cofactor evidence="1">
        <name>Mg(2+)</name>
        <dbReference type="ChEBI" id="CHEBI:18420"/>
    </cofactor>
    <cofactor evidence="1">
        <name>Mn(2+)</name>
        <dbReference type="ChEBI" id="CHEBI:29035"/>
    </cofactor>
</comment>
<comment type="similarity">
    <text evidence="1">Belongs to the SELO family.</text>
</comment>
<evidence type="ECO:0000255" key="1">
    <source>
        <dbReference type="HAMAP-Rule" id="MF_00692"/>
    </source>
</evidence>
<gene>
    <name evidence="1" type="primary">ydiU</name>
    <name evidence="1" type="synonym">selO</name>
    <name type="ordered locus">ECS88_1757</name>
</gene>